<proteinExistence type="inferred from homology"/>
<accession>Q6KI31</accession>
<organism>
    <name type="scientific">Mycoplasma mobile (strain ATCC 43663 / 163K / NCTC 11711)</name>
    <name type="common">Mesomycoplasma mobile</name>
    <dbReference type="NCBI Taxonomy" id="267748"/>
    <lineage>
        <taxon>Bacteria</taxon>
        <taxon>Bacillati</taxon>
        <taxon>Mycoplasmatota</taxon>
        <taxon>Mycoplasmoidales</taxon>
        <taxon>Metamycoplasmataceae</taxon>
        <taxon>Mesomycoplasma</taxon>
    </lineage>
</organism>
<keyword id="KW-1185">Reference proteome</keyword>
<keyword id="KW-0687">Ribonucleoprotein</keyword>
<keyword id="KW-0689">Ribosomal protein</keyword>
<keyword id="KW-0694">RNA-binding</keyword>
<keyword id="KW-0699">rRNA-binding</keyword>
<keyword id="KW-0820">tRNA-binding</keyword>
<feature type="chain" id="PRO_0000230528" description="Small ribosomal subunit protein uS13">
    <location>
        <begin position="1"/>
        <end position="122"/>
    </location>
</feature>
<feature type="region of interest" description="Disordered" evidence="2">
    <location>
        <begin position="94"/>
        <end position="122"/>
    </location>
</feature>
<feature type="compositionally biased region" description="Basic residues" evidence="2">
    <location>
        <begin position="106"/>
        <end position="122"/>
    </location>
</feature>
<sequence length="122" mass="14009">MARILNVEIPNNKRVIISLTYVYGIGRSLSKQILAEANIDENIRVKDLSEEDLTKIRNIASRFTTEGDLRREIQLNIKRLMEIKSYRGIRHRKGLPVRGQVTQKNARTRKGPRKTVAGKKGK</sequence>
<dbReference type="EMBL" id="AE017308">
    <property type="protein sequence ID" value="AAT27745.1"/>
    <property type="molecule type" value="Genomic_DNA"/>
</dbReference>
<dbReference type="RefSeq" id="WP_011264779.1">
    <property type="nucleotide sequence ID" value="NC_006908.1"/>
</dbReference>
<dbReference type="SMR" id="Q6KI31"/>
<dbReference type="STRING" id="267748.MMOB2590"/>
<dbReference type="KEGG" id="mmo:MMOB2590"/>
<dbReference type="eggNOG" id="COG0099">
    <property type="taxonomic scope" value="Bacteria"/>
</dbReference>
<dbReference type="HOGENOM" id="CLU_103849_1_2_14"/>
<dbReference type="OrthoDB" id="9803610at2"/>
<dbReference type="Proteomes" id="UP000009072">
    <property type="component" value="Chromosome"/>
</dbReference>
<dbReference type="GO" id="GO:0005829">
    <property type="term" value="C:cytosol"/>
    <property type="evidence" value="ECO:0007669"/>
    <property type="project" value="TreeGrafter"/>
</dbReference>
<dbReference type="GO" id="GO:0015935">
    <property type="term" value="C:small ribosomal subunit"/>
    <property type="evidence" value="ECO:0007669"/>
    <property type="project" value="TreeGrafter"/>
</dbReference>
<dbReference type="GO" id="GO:0019843">
    <property type="term" value="F:rRNA binding"/>
    <property type="evidence" value="ECO:0007669"/>
    <property type="project" value="UniProtKB-UniRule"/>
</dbReference>
<dbReference type="GO" id="GO:0003735">
    <property type="term" value="F:structural constituent of ribosome"/>
    <property type="evidence" value="ECO:0007669"/>
    <property type="project" value="InterPro"/>
</dbReference>
<dbReference type="GO" id="GO:0000049">
    <property type="term" value="F:tRNA binding"/>
    <property type="evidence" value="ECO:0007669"/>
    <property type="project" value="UniProtKB-UniRule"/>
</dbReference>
<dbReference type="GO" id="GO:0006412">
    <property type="term" value="P:translation"/>
    <property type="evidence" value="ECO:0007669"/>
    <property type="project" value="UniProtKB-UniRule"/>
</dbReference>
<dbReference type="FunFam" id="1.10.8.50:FF:000001">
    <property type="entry name" value="30S ribosomal protein S13"/>
    <property type="match status" value="1"/>
</dbReference>
<dbReference type="FunFam" id="4.10.910.10:FF:000001">
    <property type="entry name" value="30S ribosomal protein S13"/>
    <property type="match status" value="1"/>
</dbReference>
<dbReference type="Gene3D" id="1.10.8.50">
    <property type="match status" value="1"/>
</dbReference>
<dbReference type="Gene3D" id="4.10.910.10">
    <property type="entry name" value="30s ribosomal protein s13, domain 2"/>
    <property type="match status" value="1"/>
</dbReference>
<dbReference type="HAMAP" id="MF_01315">
    <property type="entry name" value="Ribosomal_uS13"/>
    <property type="match status" value="1"/>
</dbReference>
<dbReference type="InterPro" id="IPR027437">
    <property type="entry name" value="Rbsml_uS13_C"/>
</dbReference>
<dbReference type="InterPro" id="IPR001892">
    <property type="entry name" value="Ribosomal_uS13"/>
</dbReference>
<dbReference type="InterPro" id="IPR010979">
    <property type="entry name" value="Ribosomal_uS13-like_H2TH"/>
</dbReference>
<dbReference type="InterPro" id="IPR019980">
    <property type="entry name" value="Ribosomal_uS13_bac-type"/>
</dbReference>
<dbReference type="InterPro" id="IPR018269">
    <property type="entry name" value="Ribosomal_uS13_CS"/>
</dbReference>
<dbReference type="NCBIfam" id="TIGR03631">
    <property type="entry name" value="uS13_bact"/>
    <property type="match status" value="1"/>
</dbReference>
<dbReference type="PANTHER" id="PTHR10871">
    <property type="entry name" value="30S RIBOSOMAL PROTEIN S13/40S RIBOSOMAL PROTEIN S18"/>
    <property type="match status" value="1"/>
</dbReference>
<dbReference type="PANTHER" id="PTHR10871:SF1">
    <property type="entry name" value="SMALL RIBOSOMAL SUBUNIT PROTEIN US13M"/>
    <property type="match status" value="1"/>
</dbReference>
<dbReference type="Pfam" id="PF00416">
    <property type="entry name" value="Ribosomal_S13"/>
    <property type="match status" value="1"/>
</dbReference>
<dbReference type="PIRSF" id="PIRSF002134">
    <property type="entry name" value="Ribosomal_S13"/>
    <property type="match status" value="1"/>
</dbReference>
<dbReference type="SUPFAM" id="SSF46946">
    <property type="entry name" value="S13-like H2TH domain"/>
    <property type="match status" value="1"/>
</dbReference>
<dbReference type="PROSITE" id="PS00646">
    <property type="entry name" value="RIBOSOMAL_S13_1"/>
    <property type="match status" value="1"/>
</dbReference>
<dbReference type="PROSITE" id="PS50159">
    <property type="entry name" value="RIBOSOMAL_S13_2"/>
    <property type="match status" value="1"/>
</dbReference>
<evidence type="ECO:0000255" key="1">
    <source>
        <dbReference type="HAMAP-Rule" id="MF_01315"/>
    </source>
</evidence>
<evidence type="ECO:0000256" key="2">
    <source>
        <dbReference type="SAM" id="MobiDB-lite"/>
    </source>
</evidence>
<evidence type="ECO:0000305" key="3"/>
<comment type="function">
    <text evidence="1">Located at the top of the head of the 30S subunit, it contacts several helices of the 16S rRNA. In the 70S ribosome it contacts the 23S rRNA (bridge B1a) and protein L5 of the 50S subunit (bridge B1b), connecting the 2 subunits; these bridges are implicated in subunit movement. Contacts the tRNAs in the A and P-sites.</text>
</comment>
<comment type="subunit">
    <text evidence="1">Part of the 30S ribosomal subunit. Forms a loose heterodimer with protein S19. Forms two bridges to the 50S subunit in the 70S ribosome.</text>
</comment>
<comment type="similarity">
    <text evidence="1">Belongs to the universal ribosomal protein uS13 family.</text>
</comment>
<reference key="1">
    <citation type="journal article" date="2004" name="Genome Res.">
        <title>The complete genome and proteome of Mycoplasma mobile.</title>
        <authorList>
            <person name="Jaffe J.D."/>
            <person name="Stange-Thomann N."/>
            <person name="Smith C."/>
            <person name="DeCaprio D."/>
            <person name="Fisher S."/>
            <person name="Butler J."/>
            <person name="Calvo S."/>
            <person name="Elkins T."/>
            <person name="FitzGerald M.G."/>
            <person name="Hafez N."/>
            <person name="Kodira C.D."/>
            <person name="Major J."/>
            <person name="Wang S."/>
            <person name="Wilkinson J."/>
            <person name="Nicol R."/>
            <person name="Nusbaum C."/>
            <person name="Birren B."/>
            <person name="Berg H.C."/>
            <person name="Church G.M."/>
        </authorList>
    </citation>
    <scope>NUCLEOTIDE SEQUENCE [LARGE SCALE GENOMIC DNA]</scope>
    <source>
        <strain>ATCC 43663 / NCTC 11711 / 163 K</strain>
    </source>
</reference>
<protein>
    <recommendedName>
        <fullName evidence="1">Small ribosomal subunit protein uS13</fullName>
    </recommendedName>
    <alternativeName>
        <fullName evidence="3">30S ribosomal protein S13</fullName>
    </alternativeName>
</protein>
<name>RS13_MYCM1</name>
<gene>
    <name evidence="1" type="primary">rpsM</name>
    <name type="ordered locus">MMOB2590</name>
</gene>